<sequence>MIPVILSGGSGSRLWPLSRKQFPKQFLALTGEHTLFQQTLERLVFEGMDTPIVVCNKDHRFIVNEQLANRKLECQRILMEPFGRNTAPAVALTAMMLVNEGRDELMLVLPADHVIDDQKALQRALALATVAAERGEMVLFGVPATRPETGYGYIKSTNDSLLPEGVSRVQQFVEKPDEKRAVEFVKSGGYFWNSGMFLFRASRFLEELKKHDPDIYDTCVLTLERSEQTADTVTLDDATFACCPDNSIDYAVMEKTQRACVVPLSAGWSDVGCWASLWAVNDKDIHGNVSKGDVVIQDSRNCMIHGNGKLVSVIGLDNIVVVETKDAMMIAHKDKVQGVKQMVSTLNDQGRSETQNHCEVYRPWGSYDSVDMGGRFQVKHISVKPGACLSLQMHHHRAEHWIVVSGTAEVTCDENVFLLTENQSTYIPIASVHRLRNPGKIPLEIIEVQSGSYLGEDDIERFEDIYGRSTPVERGVSVKTIAQ</sequence>
<dbReference type="EC" id="5.3.1.8"/>
<dbReference type="EC" id="2.7.7.13"/>
<dbReference type="EMBL" id="AF527790">
    <property type="protein sequence ID" value="AAP46700.1"/>
    <property type="molecule type" value="Genomic_DNA"/>
</dbReference>
<dbReference type="RefSeq" id="WP_012722325.1">
    <property type="nucleotide sequence ID" value="NZ_CABVHZ010000006.1"/>
</dbReference>
<dbReference type="SMR" id="P59785"/>
<dbReference type="PATRIC" id="fig|294.129.peg.5011"/>
<dbReference type="eggNOG" id="COG0662">
    <property type="taxonomic scope" value="Bacteria"/>
</dbReference>
<dbReference type="eggNOG" id="COG0836">
    <property type="taxonomic scope" value="Bacteria"/>
</dbReference>
<dbReference type="UniPathway" id="UPA00126">
    <property type="reaction ID" value="UER00423"/>
</dbReference>
<dbReference type="UniPathway" id="UPA00126">
    <property type="reaction ID" value="UER00930"/>
</dbReference>
<dbReference type="GO" id="GO:0005525">
    <property type="term" value="F:GTP binding"/>
    <property type="evidence" value="ECO:0007669"/>
    <property type="project" value="UniProtKB-KW"/>
</dbReference>
<dbReference type="GO" id="GO:0004475">
    <property type="term" value="F:mannose-1-phosphate guanylyltransferase (GTP) activity"/>
    <property type="evidence" value="ECO:0007669"/>
    <property type="project" value="UniProtKB-EC"/>
</dbReference>
<dbReference type="GO" id="GO:0004476">
    <property type="term" value="F:mannose-6-phosphate isomerase activity"/>
    <property type="evidence" value="ECO:0007669"/>
    <property type="project" value="UniProtKB-EC"/>
</dbReference>
<dbReference type="GO" id="GO:0042121">
    <property type="term" value="P:alginic acid biosynthetic process"/>
    <property type="evidence" value="ECO:0007669"/>
    <property type="project" value="UniProtKB-KW"/>
</dbReference>
<dbReference type="GO" id="GO:0009298">
    <property type="term" value="P:GDP-mannose biosynthetic process"/>
    <property type="evidence" value="ECO:0007669"/>
    <property type="project" value="UniProtKB-UniPathway"/>
</dbReference>
<dbReference type="CDD" id="cd02213">
    <property type="entry name" value="cupin_PMI_typeII_C"/>
    <property type="match status" value="1"/>
</dbReference>
<dbReference type="CDD" id="cd02509">
    <property type="entry name" value="GDP-M1P_Guanylyltransferase"/>
    <property type="match status" value="1"/>
</dbReference>
<dbReference type="FunFam" id="3.90.550.10:FF:000046">
    <property type="entry name" value="Mannose-1-phosphate guanylyltransferase (GDP)"/>
    <property type="match status" value="1"/>
</dbReference>
<dbReference type="FunFam" id="2.60.120.10:FF:000032">
    <property type="entry name" value="Mannose-1-phosphate guanylyltransferase/mannose-6-phosphate isomerase"/>
    <property type="match status" value="1"/>
</dbReference>
<dbReference type="Gene3D" id="2.60.120.10">
    <property type="entry name" value="Jelly Rolls"/>
    <property type="match status" value="1"/>
</dbReference>
<dbReference type="Gene3D" id="3.90.550.10">
    <property type="entry name" value="Spore Coat Polysaccharide Biosynthesis Protein SpsA, Chain A"/>
    <property type="match status" value="1"/>
</dbReference>
<dbReference type="InterPro" id="IPR049577">
    <property type="entry name" value="GMPP_N"/>
</dbReference>
<dbReference type="InterPro" id="IPR006375">
    <property type="entry name" value="Man1P_GuaTrfase/Man6P_Isoase"/>
</dbReference>
<dbReference type="InterPro" id="IPR001538">
    <property type="entry name" value="Man6P_isomerase-2_C"/>
</dbReference>
<dbReference type="InterPro" id="IPR054566">
    <property type="entry name" value="ManC/GMP-like_b-helix"/>
</dbReference>
<dbReference type="InterPro" id="IPR051161">
    <property type="entry name" value="Mannose-6P_isomerase_type2"/>
</dbReference>
<dbReference type="InterPro" id="IPR005835">
    <property type="entry name" value="NTP_transferase_dom"/>
</dbReference>
<dbReference type="InterPro" id="IPR029044">
    <property type="entry name" value="Nucleotide-diphossugar_trans"/>
</dbReference>
<dbReference type="InterPro" id="IPR014710">
    <property type="entry name" value="RmlC-like_jellyroll"/>
</dbReference>
<dbReference type="InterPro" id="IPR011051">
    <property type="entry name" value="RmlC_Cupin_sf"/>
</dbReference>
<dbReference type="NCBIfam" id="TIGR01479">
    <property type="entry name" value="GMP_PMI"/>
    <property type="match status" value="1"/>
</dbReference>
<dbReference type="PANTHER" id="PTHR46390">
    <property type="entry name" value="MANNOSE-1-PHOSPHATE GUANYLYLTRANSFERASE"/>
    <property type="match status" value="1"/>
</dbReference>
<dbReference type="PANTHER" id="PTHR46390:SF1">
    <property type="entry name" value="MANNOSE-1-PHOSPHATE GUANYLYLTRANSFERASE"/>
    <property type="match status" value="1"/>
</dbReference>
<dbReference type="Pfam" id="PF22640">
    <property type="entry name" value="ManC_GMP_beta-helix"/>
    <property type="match status" value="1"/>
</dbReference>
<dbReference type="Pfam" id="PF01050">
    <property type="entry name" value="MannoseP_isomer"/>
    <property type="match status" value="1"/>
</dbReference>
<dbReference type="Pfam" id="PF00483">
    <property type="entry name" value="NTP_transferase"/>
    <property type="match status" value="1"/>
</dbReference>
<dbReference type="SUPFAM" id="SSF53448">
    <property type="entry name" value="Nucleotide-diphospho-sugar transferases"/>
    <property type="match status" value="1"/>
</dbReference>
<dbReference type="SUPFAM" id="SSF51182">
    <property type="entry name" value="RmlC-like cupins"/>
    <property type="match status" value="1"/>
</dbReference>
<reference key="1">
    <citation type="journal article" date="2003" name="J. Bacteriol.">
        <title>The Pseudomonas fluorescens AlgG protein, but not its mannuronan C-5-epimerase activity, is needed for alginate polymer formation.</title>
        <authorList>
            <person name="Gimmestad M."/>
            <person name="Sletta H."/>
            <person name="Ertesvaag H."/>
            <person name="Bakkevig K."/>
            <person name="Jain S."/>
            <person name="Suh S.-J."/>
            <person name="Skjaak-Braek G."/>
            <person name="Ellingsen T.E."/>
            <person name="Ohman D.E."/>
            <person name="Valla S."/>
        </authorList>
    </citation>
    <scope>NUCLEOTIDE SEQUENCE [GENOMIC DNA]</scope>
    <source>
        <strain>ATCC 17397 / DSM 50091 / CIP 73.25 / NCIMB 10525 / 12</strain>
    </source>
</reference>
<protein>
    <recommendedName>
        <fullName>Alginate biosynthesis protein AlgA</fullName>
    </recommendedName>
    <domain>
        <recommendedName>
            <fullName>Mannose-6-phosphate isomerase</fullName>
            <ecNumber>5.3.1.8</ecNumber>
        </recommendedName>
        <alternativeName>
            <fullName>Phosphohexomutase</fullName>
        </alternativeName>
        <alternativeName>
            <fullName>Phosphomannose isomerase</fullName>
            <shortName>PMI</shortName>
        </alternativeName>
    </domain>
    <domain>
        <recommendedName>
            <fullName>Mannose-1-phosphate guanylyltransferase</fullName>
            <ecNumber>2.7.7.13</ecNumber>
        </recommendedName>
        <alternativeName>
            <fullName>GDP-mannose pyrophosphorylase</fullName>
            <shortName>GMP</shortName>
            <shortName>GMPP</shortName>
        </alternativeName>
        <alternativeName>
            <fullName>GTP--mannose-1-phosphate guanylyltransferase</fullName>
        </alternativeName>
    </domain>
</protein>
<accession>P59785</accession>
<name>ALGA_PSEFL</name>
<feature type="chain" id="PRO_0000194249" description="Alginate biosynthesis protein AlgA">
    <location>
        <begin position="1"/>
        <end position="483"/>
    </location>
</feature>
<organism>
    <name type="scientific">Pseudomonas fluorescens</name>
    <dbReference type="NCBI Taxonomy" id="294"/>
    <lineage>
        <taxon>Bacteria</taxon>
        <taxon>Pseudomonadati</taxon>
        <taxon>Pseudomonadota</taxon>
        <taxon>Gammaproteobacteria</taxon>
        <taxon>Pseudomonadales</taxon>
        <taxon>Pseudomonadaceae</taxon>
        <taxon>Pseudomonas</taxon>
    </lineage>
</organism>
<proteinExistence type="inferred from homology"/>
<evidence type="ECO:0000250" key="1"/>
<evidence type="ECO:0000305" key="2"/>
<comment type="function">
    <text>Produces a precursor for alginate polymerization. The alginate layer provides a protective barrier against host immune defenses and antibiotics.</text>
</comment>
<comment type="catalytic activity">
    <reaction>
        <text>D-mannose 6-phosphate = D-fructose 6-phosphate</text>
        <dbReference type="Rhea" id="RHEA:12356"/>
        <dbReference type="ChEBI" id="CHEBI:58735"/>
        <dbReference type="ChEBI" id="CHEBI:61527"/>
        <dbReference type="EC" id="5.3.1.8"/>
    </reaction>
</comment>
<comment type="catalytic activity">
    <reaction>
        <text>alpha-D-mannose 1-phosphate + GTP + H(+) = GDP-alpha-D-mannose + diphosphate</text>
        <dbReference type="Rhea" id="RHEA:15229"/>
        <dbReference type="ChEBI" id="CHEBI:15378"/>
        <dbReference type="ChEBI" id="CHEBI:33019"/>
        <dbReference type="ChEBI" id="CHEBI:37565"/>
        <dbReference type="ChEBI" id="CHEBI:57527"/>
        <dbReference type="ChEBI" id="CHEBI:58409"/>
        <dbReference type="EC" id="2.7.7.13"/>
    </reaction>
</comment>
<comment type="cofactor">
    <cofactor evidence="1">
        <name>Co(2+)</name>
        <dbReference type="ChEBI" id="CHEBI:48828"/>
    </cofactor>
    <text evidence="1">Co(2+) (for PMI).</text>
</comment>
<comment type="pathway">
    <text>Nucleotide-sugar biosynthesis; GDP-alpha-D-mannose biosynthesis; GDP-alpha-D-mannose from alpha-D-mannose 1-phosphate (GTP route): step 1/1.</text>
</comment>
<comment type="pathway">
    <text>Nucleotide-sugar biosynthesis; GDP-alpha-D-mannose biosynthesis; alpha-D-mannose 1-phosphate from D-fructose 6-phosphate: step 1/2.</text>
</comment>
<comment type="subunit">
    <text evidence="1">Monomer.</text>
</comment>
<comment type="similarity">
    <text evidence="2">Belongs to the mannose-6-phosphate isomerase type 2 family.</text>
</comment>
<keyword id="KW-0016">Alginate biosynthesis</keyword>
<keyword id="KW-0170">Cobalt</keyword>
<keyword id="KW-0342">GTP-binding</keyword>
<keyword id="KW-0413">Isomerase</keyword>
<keyword id="KW-0511">Multifunctional enzyme</keyword>
<keyword id="KW-0547">Nucleotide-binding</keyword>
<keyword id="KW-0548">Nucleotidyltransferase</keyword>
<keyword id="KW-0808">Transferase</keyword>
<gene>
    <name type="primary">algA</name>
</gene>